<name>ASR2_SOLLC</name>
<keyword id="KW-1185">Reference proteome</keyword>
<sequence length="114" mass="13019">MAEEKHQHHHHLFHHKNKEDEGGPVDYEKEVKHHSHLEKIGELGAVAAGALALHEKHKAKKDPEHAHKHKIEEEIMAVAAVGAGGFAFHEHHQKKDAKKEKKEVEGGHHHHHHY</sequence>
<protein>
    <recommendedName>
        <fullName evidence="2">Abscisic stress-ripening protein 2</fullName>
    </recommendedName>
</protein>
<gene>
    <name evidence="2" type="primary">ASR2</name>
</gene>
<accession>P37219</accession>
<evidence type="ECO:0000256" key="1">
    <source>
        <dbReference type="SAM" id="MobiDB-lite"/>
    </source>
</evidence>
<evidence type="ECO:0000303" key="2">
    <source>
    </source>
</evidence>
<evidence type="ECO:0000305" key="3"/>
<dbReference type="EMBL" id="X74907">
    <property type="protein sequence ID" value="CAA52873.1"/>
    <property type="molecule type" value="Genomic_DNA"/>
</dbReference>
<dbReference type="EMBL" id="AK224695">
    <property type="status" value="NOT_ANNOTATED_CDS"/>
    <property type="molecule type" value="mRNA"/>
</dbReference>
<dbReference type="PIR" id="S37150">
    <property type="entry name" value="S37150"/>
</dbReference>
<dbReference type="STRING" id="4081.P37219"/>
<dbReference type="PaxDb" id="4081-Solyc04g071580.2.1"/>
<dbReference type="eggNOG" id="ENOG502S1T2">
    <property type="taxonomic scope" value="Eukaryota"/>
</dbReference>
<dbReference type="InParanoid" id="P37219"/>
<dbReference type="Proteomes" id="UP000004994">
    <property type="component" value="Unplaced"/>
</dbReference>
<dbReference type="InterPro" id="IPR003496">
    <property type="entry name" value="ABA_WDS"/>
</dbReference>
<dbReference type="PANTHER" id="PTHR33801:SF7">
    <property type="entry name" value="ABSCISIC STRESS-RIPENING PROTEIN 2"/>
    <property type="match status" value="1"/>
</dbReference>
<dbReference type="PANTHER" id="PTHR33801">
    <property type="entry name" value="ABSCISIC STRESS-RIPENING PROTEIN 5"/>
    <property type="match status" value="1"/>
</dbReference>
<dbReference type="Pfam" id="PF02496">
    <property type="entry name" value="ABA_WDS"/>
    <property type="match status" value="1"/>
</dbReference>
<comment type="similarity">
    <text evidence="3">Belongs to the abscisic acid and water stress-induced protein family.</text>
</comment>
<organism>
    <name type="scientific">Solanum lycopersicum</name>
    <name type="common">Tomato</name>
    <name type="synonym">Lycopersicon esculentum</name>
    <dbReference type="NCBI Taxonomy" id="4081"/>
    <lineage>
        <taxon>Eukaryota</taxon>
        <taxon>Viridiplantae</taxon>
        <taxon>Streptophyta</taxon>
        <taxon>Embryophyta</taxon>
        <taxon>Tracheophyta</taxon>
        <taxon>Spermatophyta</taxon>
        <taxon>Magnoliopsida</taxon>
        <taxon>eudicotyledons</taxon>
        <taxon>Gunneridae</taxon>
        <taxon>Pentapetalae</taxon>
        <taxon>asterids</taxon>
        <taxon>lamiids</taxon>
        <taxon>Solanales</taxon>
        <taxon>Solanaceae</taxon>
        <taxon>Solanoideae</taxon>
        <taxon>Solaneae</taxon>
        <taxon>Solanum</taxon>
        <taxon>Solanum subgen. Lycopersicon</taxon>
    </lineage>
</organism>
<feature type="chain" id="PRO_0000064708" description="Abscisic stress-ripening protein 2">
    <location>
        <begin position="1"/>
        <end position="114"/>
    </location>
</feature>
<feature type="region of interest" description="Disordered" evidence="1">
    <location>
        <begin position="1"/>
        <end position="25"/>
    </location>
</feature>
<feature type="region of interest" description="Disordered" evidence="1">
    <location>
        <begin position="88"/>
        <end position="114"/>
    </location>
</feature>
<feature type="compositionally biased region" description="Basic residues" evidence="1">
    <location>
        <begin position="7"/>
        <end position="16"/>
    </location>
</feature>
<feature type="compositionally biased region" description="Basic and acidic residues" evidence="1">
    <location>
        <begin position="97"/>
        <end position="107"/>
    </location>
</feature>
<feature type="sequence conflict" description="In Ref. 2; AK224695." evidence="3" ref="2">
    <original>M</original>
    <variation>A</variation>
    <location>
        <position position="76"/>
    </location>
</feature>
<reference key="1">
    <citation type="journal article" date="1994" name="Plant Physiol.">
        <title>Genomic nucleotide sequence of tomato Asr2, a second member of the stress/ripening-induced Asr1 gene family.</title>
        <authorList>
            <person name="Amitai-Zeigerson H."/>
            <person name="Scolnik P.A."/>
            <person name="Bar-Zvi D."/>
        </authorList>
    </citation>
    <scope>NUCLEOTIDE SEQUENCE [GENOMIC DNA]</scope>
    <source>
        <strain>cv. Ailsa Craig</strain>
    </source>
</reference>
<reference key="2">
    <citation type="journal article" date="2005" name="Plant Biotechnol.">
        <title>Expressed sequence tags of full-length cDNA clones from the miniature tomato (Lycopersicon esculentum) cultivar Micro-Tom.</title>
        <authorList>
            <person name="Tsugane T."/>
            <person name="Watanabe M."/>
            <person name="Yano K."/>
            <person name="Sakurai N."/>
            <person name="Suzuki H."/>
            <person name="Shibata D."/>
        </authorList>
    </citation>
    <scope>NUCLEOTIDE SEQUENCE [MRNA]</scope>
    <source>
        <strain>cv. MicroTom</strain>
        <tissue>Fruit</tissue>
    </source>
</reference>
<proteinExistence type="inferred from homology"/>